<comment type="function">
    <text evidence="1">With S4 and S5 plays an important role in translational accuracy.</text>
</comment>
<comment type="function">
    <text evidence="1">Interacts with and stabilizes bases of the 16S rRNA that are involved in tRNA selection in the A site and with the mRNA backbone. Located at the interface of the 30S and 50S subunits, it traverses the body of the 30S subunit contacting proteins on the other side and probably holding the rRNA structure together. The combined cluster of proteins S8, S12 and S17 appears to hold together the shoulder and platform of the 30S subunit (By similarity).</text>
</comment>
<comment type="subunit">
    <text evidence="1">Part of the 30S ribosomal subunit. Contacts proteins S8 and S17. May interact with IF1 in the 30S initiation complex (By similarity).</text>
</comment>
<comment type="mass spectrometry">
    <text>Strain IB-21.</text>
</comment>
<comment type="similarity">
    <text evidence="5">Belongs to the universal ribosomal protein uS12 family.</text>
</comment>
<reference key="1">
    <citation type="journal article" date="1992" name="Biochimie">
        <title>Ribosomal proteins from Thermus thermophilus for structural investigations.</title>
        <authorList>
            <person name="Garber M.B."/>
            <person name="Agalarov S.C."/>
            <person name="Eliseikina I.A."/>
            <person name="Fomenkova N.P."/>
            <person name="Nikonov S.V."/>
            <person name="Sedelnikova S.E."/>
            <person name="Shikaeva O.S."/>
            <person name="Vasiliev D."/>
            <person name="Zhdanov A.S."/>
            <person name="Liljas A."/>
            <person name="Svensson L.A."/>
        </authorList>
    </citation>
    <scope>PROTEIN SEQUENCE OF 2-8</scope>
    <source>
        <strain>VK1</strain>
    </source>
</reference>
<reference key="2">
    <citation type="journal article" date="2001" name="J. Mol. Biol.">
        <title>Streptomycin-resistant and streptomycin-dependent mutants of the extreme thermophile Thermus thermophilus.</title>
        <authorList>
            <person name="Gregory S.T."/>
            <person name="Cate J.H.D."/>
            <person name="Dahlberg A.E."/>
        </authorList>
    </citation>
    <scope>NUCLEOTIDE SEQUENCE [GENOMIC DNA] OF 5-132</scope>
    <scope>STREPTOMYCIN RESISTANT VARIANTS</scope>
    <source>
        <strain>ATCC 43815 / IB-21</strain>
    </source>
</reference>
<reference key="3">
    <citation type="journal article" date="2005" name="Proteomics">
        <title>Extending ribosomal protein identifications to unsequenced bacterial strains using matrix-assisted laser desorption/ionization mass spectrometry.</title>
        <authorList>
            <person name="Suh M.-J."/>
            <person name="Hamburg D.M."/>
            <person name="Gregory S.T."/>
            <person name="Dahlberg A.E."/>
            <person name="Limbach P.A."/>
        </authorList>
    </citation>
    <scope>MASS SPECTROMETRY</scope>
    <scope>METHYLTHIOLATION AT ASP-89</scope>
    <source>
        <strain>ATCC 43815 / IB-21</strain>
    </source>
</reference>
<evidence type="ECO:0000250" key="1"/>
<evidence type="ECO:0000256" key="2">
    <source>
        <dbReference type="SAM" id="MobiDB-lite"/>
    </source>
</evidence>
<evidence type="ECO:0000269" key="3">
    <source>
    </source>
</evidence>
<evidence type="ECO:0000269" key="4">
    <source>
    </source>
</evidence>
<evidence type="ECO:0000305" key="5"/>
<evidence type="ECO:0007829" key="6">
    <source>
        <dbReference type="PDB" id="4V8X"/>
    </source>
</evidence>
<keyword id="KW-0002">3D-structure</keyword>
<keyword id="KW-0046">Antibiotic resistance</keyword>
<keyword id="KW-0903">Direct protein sequencing</keyword>
<keyword id="KW-0488">Methylation</keyword>
<keyword id="KW-0687">Ribonucleoprotein</keyword>
<keyword id="KW-0689">Ribosomal protein</keyword>
<keyword id="KW-0694">RNA-binding</keyword>
<keyword id="KW-0699">rRNA-binding</keyword>
<keyword id="KW-0820">tRNA-binding</keyword>
<proteinExistence type="evidence at protein level"/>
<protein>
    <recommendedName>
        <fullName evidence="5">Small ribosomal subunit protein uS12</fullName>
    </recommendedName>
    <alternativeName>
        <fullName>30S ribosomal protein S12</fullName>
    </alternativeName>
</protein>
<gene>
    <name type="primary">rpsL</name>
    <name type="synonym">rps12</name>
</gene>
<organism>
    <name type="scientific">Thermus thermophilus</name>
    <dbReference type="NCBI Taxonomy" id="274"/>
    <lineage>
        <taxon>Bacteria</taxon>
        <taxon>Thermotogati</taxon>
        <taxon>Deinococcota</taxon>
        <taxon>Deinococci</taxon>
        <taxon>Thermales</taxon>
        <taxon>Thermaceae</taxon>
        <taxon>Thermus</taxon>
    </lineage>
</organism>
<name>RS12_THETH</name>
<accession>P17293</accession>
<accession>Q9EYQ6</accession>
<sequence>MPTINQLVRKGREKVRKKSKVPALKGAPFRRGVCTVVRTVTPKKPNSALRKVAKVRLTSGYEVTAYIPGEGHNLQEHSVVLIRGGRVKDLPGVRYHIVRGVYDAAGVKDRKKSRSKYGTKKPKEAAKTAAKK</sequence>
<feature type="initiator methionine" description="Removed" evidence="4">
    <location>
        <position position="1"/>
    </location>
</feature>
<feature type="chain" id="PRO_0000146342" description="Small ribosomal subunit protein uS12">
    <location>
        <begin position="2"/>
        <end position="132"/>
    </location>
</feature>
<feature type="region of interest" description="Disordered" evidence="2">
    <location>
        <begin position="106"/>
        <end position="132"/>
    </location>
</feature>
<feature type="compositionally biased region" description="Basic residues" evidence="2">
    <location>
        <begin position="109"/>
        <end position="120"/>
    </location>
</feature>
<feature type="modified residue" description="3-methylthioaspartic acid" evidence="3">
    <location>
        <position position="89"/>
    </location>
</feature>
<feature type="sequence variant" description="In strain: Isolate HG18; streptomycin resistant.">
    <original>P</original>
    <variation>S</variation>
    <location>
        <position position="42"/>
    </location>
</feature>
<feature type="sequence variant" description="In strain: Isolate HG3; streptomycin resistant.">
    <original>K</original>
    <variation>R</variation>
    <location>
        <position position="43"/>
    </location>
</feature>
<feature type="sequence variant" description="In strain: Isolate HG14; streptomycin pseudo-dependent.">
    <original>R</original>
    <variation>C</variation>
    <location>
        <position position="86"/>
    </location>
</feature>
<feature type="sequence variant" description="In strain: Isolate HG31; streptomycin pseudo-dependent.">
    <original>R</original>
    <variation>H</variation>
    <location>
        <position position="86"/>
    </location>
</feature>
<feature type="sequence variant" description="In strain: Isolate HG19; streptomycin resistant.">
    <original>K</original>
    <variation>E</variation>
    <location>
        <position position="88"/>
    </location>
</feature>
<feature type="sequence variant" description="In strain: Isolate HG1; streptomycin resistant.">
    <original>K</original>
    <variation>R</variation>
    <location>
        <position position="88"/>
    </location>
</feature>
<feature type="sequence variant" description="In strain: Isolate HG11; streptomycin dependent.">
    <original>P</original>
    <variation>L</variation>
    <location>
        <position position="91"/>
    </location>
</feature>
<feature type="helix" evidence="6">
    <location>
        <begin position="4"/>
        <end position="9"/>
    </location>
</feature>
<feature type="strand" evidence="6">
    <location>
        <begin position="24"/>
        <end position="26"/>
    </location>
</feature>
<feature type="strand" evidence="6">
    <location>
        <begin position="30"/>
        <end position="40"/>
    </location>
</feature>
<feature type="strand" evidence="6">
    <location>
        <begin position="50"/>
        <end position="57"/>
    </location>
</feature>
<feature type="strand" evidence="6">
    <location>
        <begin position="62"/>
        <end position="66"/>
    </location>
</feature>
<feature type="strand" evidence="6">
    <location>
        <begin position="79"/>
        <end position="82"/>
    </location>
</feature>
<feature type="turn" evidence="6">
    <location>
        <begin position="115"/>
        <end position="118"/>
    </location>
</feature>
<dbReference type="EMBL" id="AF316617">
    <property type="protein sequence ID" value="AAG38586.1"/>
    <property type="molecule type" value="Genomic_DNA"/>
</dbReference>
<dbReference type="PDB" id="2OM7">
    <property type="method" value="EM"/>
    <property type="resolution" value="7.30 A"/>
    <property type="chains" value="E=1-132"/>
</dbReference>
<dbReference type="PDB" id="4V8X">
    <property type="method" value="X-ray"/>
    <property type="resolution" value="3.35 A"/>
    <property type="chains" value="AL/CL=1-132"/>
</dbReference>
<dbReference type="PDBsum" id="2OM7"/>
<dbReference type="PDBsum" id="4V8X"/>
<dbReference type="SMR" id="P17293"/>
<dbReference type="IntAct" id="P17293">
    <property type="interactions" value="1"/>
</dbReference>
<dbReference type="MINT" id="P17293"/>
<dbReference type="OMA" id="WANTPHA"/>
<dbReference type="GO" id="GO:0015935">
    <property type="term" value="C:small ribosomal subunit"/>
    <property type="evidence" value="ECO:0007669"/>
    <property type="project" value="InterPro"/>
</dbReference>
<dbReference type="GO" id="GO:0019843">
    <property type="term" value="F:rRNA binding"/>
    <property type="evidence" value="ECO:0007669"/>
    <property type="project" value="UniProtKB-UniRule"/>
</dbReference>
<dbReference type="GO" id="GO:0003735">
    <property type="term" value="F:structural constituent of ribosome"/>
    <property type="evidence" value="ECO:0007669"/>
    <property type="project" value="InterPro"/>
</dbReference>
<dbReference type="GO" id="GO:0000049">
    <property type="term" value="F:tRNA binding"/>
    <property type="evidence" value="ECO:0007669"/>
    <property type="project" value="UniProtKB-UniRule"/>
</dbReference>
<dbReference type="GO" id="GO:0046677">
    <property type="term" value="P:response to antibiotic"/>
    <property type="evidence" value="ECO:0007669"/>
    <property type="project" value="UniProtKB-KW"/>
</dbReference>
<dbReference type="GO" id="GO:0006412">
    <property type="term" value="P:translation"/>
    <property type="evidence" value="ECO:0007669"/>
    <property type="project" value="UniProtKB-UniRule"/>
</dbReference>
<dbReference type="CDD" id="cd03368">
    <property type="entry name" value="Ribosomal_S12"/>
    <property type="match status" value="1"/>
</dbReference>
<dbReference type="FunFam" id="2.40.50.140:FF:000001">
    <property type="entry name" value="30S ribosomal protein S12"/>
    <property type="match status" value="1"/>
</dbReference>
<dbReference type="Gene3D" id="2.40.50.140">
    <property type="entry name" value="Nucleic acid-binding proteins"/>
    <property type="match status" value="1"/>
</dbReference>
<dbReference type="HAMAP" id="MF_00403_B">
    <property type="entry name" value="Ribosomal_uS12_B"/>
    <property type="match status" value="1"/>
</dbReference>
<dbReference type="InterPro" id="IPR012340">
    <property type="entry name" value="NA-bd_OB-fold"/>
</dbReference>
<dbReference type="InterPro" id="IPR006032">
    <property type="entry name" value="Ribosomal_uS12"/>
</dbReference>
<dbReference type="InterPro" id="IPR005679">
    <property type="entry name" value="Ribosomal_uS12_bac"/>
</dbReference>
<dbReference type="NCBIfam" id="TIGR00981">
    <property type="entry name" value="rpsL_bact"/>
    <property type="match status" value="1"/>
</dbReference>
<dbReference type="PANTHER" id="PTHR11652">
    <property type="entry name" value="30S RIBOSOMAL PROTEIN S12 FAMILY MEMBER"/>
    <property type="match status" value="1"/>
</dbReference>
<dbReference type="Pfam" id="PF00164">
    <property type="entry name" value="Ribosom_S12_S23"/>
    <property type="match status" value="1"/>
</dbReference>
<dbReference type="PIRSF" id="PIRSF002133">
    <property type="entry name" value="Ribosomal_S12/S23"/>
    <property type="match status" value="1"/>
</dbReference>
<dbReference type="PRINTS" id="PR01034">
    <property type="entry name" value="RIBOSOMALS12"/>
</dbReference>
<dbReference type="SUPFAM" id="SSF50249">
    <property type="entry name" value="Nucleic acid-binding proteins"/>
    <property type="match status" value="1"/>
</dbReference>
<dbReference type="PROSITE" id="PS00055">
    <property type="entry name" value="RIBOSOMAL_S12"/>
    <property type="match status" value="1"/>
</dbReference>